<name>GDF8_LEPCA</name>
<accession>Q8HY52</accession>
<proteinExistence type="evidence at transcript level"/>
<gene>
    <name type="primary">MSTN</name>
    <name type="synonym">GDF8</name>
</gene>
<organism>
    <name type="scientific">Lepus capensis</name>
    <name type="common">Brown hare</name>
    <dbReference type="NCBI Taxonomy" id="9981"/>
    <lineage>
        <taxon>Eukaryota</taxon>
        <taxon>Metazoa</taxon>
        <taxon>Chordata</taxon>
        <taxon>Craniata</taxon>
        <taxon>Vertebrata</taxon>
        <taxon>Euteleostomi</taxon>
        <taxon>Mammalia</taxon>
        <taxon>Eutheria</taxon>
        <taxon>Euarchontoglires</taxon>
        <taxon>Glires</taxon>
        <taxon>Lagomorpha</taxon>
        <taxon>Leporidae</taxon>
        <taxon>Lepus</taxon>
    </lineage>
</organism>
<sequence length="375" mass="42526">MQKLQISVYIYLFMLIVAGPVDLNENSEQKENVEKDGLCNACTWGQNSKYSRIEAIKIQILSKLRLGTAPNISEDAIRQLLPKAPPLRELIDQYDVQRDDSSDGSLEDDDYHATTETIITMPTESDFLMQVEGKPKCCFFKFSSKIQYNKVVKAQLWIYLRPVKTPTTVFVQILRLIKPMKDGTRYTGIRSLKLDMNPGTGIWQSIDVKTVLQNWLKQPESNLGIEIKALDENGHDLAVTFPGPGEDGLNPFLEVKVTDTPKRSRRDFGLDCDEHSTESRCCRYPLTVDFEAFGWDWIIAPKRYKANYCSGECEFVFLQKYPHTHLVHQANPRGSAGPCCTPTKMSPINMLYFNGEGQIIYGKIPAMVVDRCGCS</sequence>
<evidence type="ECO:0000250" key="1">
    <source>
        <dbReference type="UniProtKB" id="O08689"/>
    </source>
</evidence>
<evidence type="ECO:0000250" key="2">
    <source>
        <dbReference type="UniProtKB" id="O14793"/>
    </source>
</evidence>
<evidence type="ECO:0000255" key="3"/>
<evidence type="ECO:0000305" key="4"/>
<reference key="1">
    <citation type="submission" date="2003-05" db="EMBL/GenBank/DDBJ databases">
        <title>Cloning and analysis of GDF-8 from hare skeletal muscle cDNA library.</title>
        <authorList>
            <person name="Wei M."/>
            <person name="Wang L."/>
            <person name="Li Y."/>
            <person name="Li W."/>
        </authorList>
    </citation>
    <scope>NUCLEOTIDE SEQUENCE [MRNA]</scope>
    <source>
        <strain>Swinhoei</strain>
        <tissue>Skeletal muscle</tissue>
    </source>
</reference>
<feature type="signal peptide" evidence="3">
    <location>
        <begin position="1"/>
        <end position="18"/>
    </location>
</feature>
<feature type="propeptide" id="PRO_0000033952" evidence="3">
    <location>
        <begin position="19"/>
        <end position="266"/>
    </location>
</feature>
<feature type="chain" id="PRO_0000033953" description="Growth/differentiation factor 8">
    <location>
        <begin position="267"/>
        <end position="375"/>
    </location>
</feature>
<feature type="site" description="Cleavage" evidence="1">
    <location>
        <begin position="98"/>
        <end position="99"/>
    </location>
</feature>
<feature type="glycosylation site" description="N-linked (GlcNAc...) asparagine" evidence="3">
    <location>
        <position position="71"/>
    </location>
</feature>
<feature type="disulfide bond" evidence="2">
    <location>
        <begin position="272"/>
        <end position="282"/>
    </location>
</feature>
<feature type="disulfide bond" evidence="2">
    <location>
        <begin position="281"/>
        <end position="340"/>
    </location>
</feature>
<feature type="disulfide bond" evidence="2">
    <location>
        <begin position="309"/>
        <end position="372"/>
    </location>
</feature>
<feature type="disulfide bond" evidence="2">
    <location>
        <begin position="313"/>
        <end position="374"/>
    </location>
</feature>
<feature type="disulfide bond" description="Interchain" evidence="2">
    <location>
        <position position="339"/>
    </location>
</feature>
<dbReference type="EMBL" id="AY169410">
    <property type="protein sequence ID" value="AAN87890.1"/>
    <property type="molecule type" value="mRNA"/>
</dbReference>
<dbReference type="SMR" id="Q8HY52"/>
<dbReference type="GlyCosmos" id="Q8HY52">
    <property type="glycosylation" value="1 site, No reported glycans"/>
</dbReference>
<dbReference type="GO" id="GO:0005615">
    <property type="term" value="C:extracellular space"/>
    <property type="evidence" value="ECO:0007669"/>
    <property type="project" value="UniProtKB-KW"/>
</dbReference>
<dbReference type="GO" id="GO:0005125">
    <property type="term" value="F:cytokine activity"/>
    <property type="evidence" value="ECO:0007669"/>
    <property type="project" value="UniProtKB-KW"/>
</dbReference>
<dbReference type="GO" id="GO:0008083">
    <property type="term" value="F:growth factor activity"/>
    <property type="evidence" value="ECO:0007669"/>
    <property type="project" value="UniProtKB-KW"/>
</dbReference>
<dbReference type="GO" id="GO:0008201">
    <property type="term" value="F:heparin binding"/>
    <property type="evidence" value="ECO:0007669"/>
    <property type="project" value="UniProtKB-KW"/>
</dbReference>
<dbReference type="GO" id="GO:0042802">
    <property type="term" value="F:identical protein binding"/>
    <property type="evidence" value="ECO:0000250"/>
    <property type="project" value="UniProtKB"/>
</dbReference>
<dbReference type="GO" id="GO:0014839">
    <property type="term" value="P:myoblast migration involved in skeletal muscle regeneration"/>
    <property type="evidence" value="ECO:0000250"/>
    <property type="project" value="UniProtKB"/>
</dbReference>
<dbReference type="GO" id="GO:2000818">
    <property type="term" value="P:negative regulation of myoblast proliferation"/>
    <property type="evidence" value="ECO:0000250"/>
    <property type="project" value="AgBase"/>
</dbReference>
<dbReference type="GO" id="GO:1902725">
    <property type="term" value="P:negative regulation of satellite cell differentiation"/>
    <property type="evidence" value="ECO:0000250"/>
    <property type="project" value="AgBase"/>
</dbReference>
<dbReference type="GO" id="GO:1902723">
    <property type="term" value="P:negative regulation of skeletal muscle satellite cell proliferation"/>
    <property type="evidence" value="ECO:0000250"/>
    <property type="project" value="AgBase"/>
</dbReference>
<dbReference type="GO" id="GO:0010592">
    <property type="term" value="P:positive regulation of lamellipodium assembly"/>
    <property type="evidence" value="ECO:0000250"/>
    <property type="project" value="UniProtKB"/>
</dbReference>
<dbReference type="GO" id="GO:0010759">
    <property type="term" value="P:positive regulation of macrophage chemotaxis"/>
    <property type="evidence" value="ECO:0000250"/>
    <property type="project" value="UniProtKB"/>
</dbReference>
<dbReference type="CDD" id="cd19388">
    <property type="entry name" value="TGF_beta_GDF8"/>
    <property type="match status" value="1"/>
</dbReference>
<dbReference type="FunFam" id="2.60.120.970:FF:000001">
    <property type="entry name" value="Growth/differentiation factor 8"/>
    <property type="match status" value="1"/>
</dbReference>
<dbReference type="FunFam" id="2.10.90.10:FF:000006">
    <property type="entry name" value="growth/differentiation factor 8"/>
    <property type="match status" value="1"/>
</dbReference>
<dbReference type="Gene3D" id="2.60.120.970">
    <property type="match status" value="1"/>
</dbReference>
<dbReference type="Gene3D" id="2.10.90.10">
    <property type="entry name" value="Cystine-knot cytokines"/>
    <property type="match status" value="1"/>
</dbReference>
<dbReference type="InterPro" id="IPR029034">
    <property type="entry name" value="Cystine-knot_cytokine"/>
</dbReference>
<dbReference type="InterPro" id="IPR001839">
    <property type="entry name" value="TGF-b_C"/>
</dbReference>
<dbReference type="InterPro" id="IPR001111">
    <property type="entry name" value="TGF-b_propeptide"/>
</dbReference>
<dbReference type="InterPro" id="IPR015615">
    <property type="entry name" value="TGF-beta-rel"/>
</dbReference>
<dbReference type="InterPro" id="IPR017948">
    <property type="entry name" value="TGFb_CS"/>
</dbReference>
<dbReference type="PANTHER" id="PTHR11848:SF150">
    <property type="entry name" value="GROWTH_DIFFERENTIATION FACTOR 8"/>
    <property type="match status" value="1"/>
</dbReference>
<dbReference type="PANTHER" id="PTHR11848">
    <property type="entry name" value="TGF-BETA FAMILY"/>
    <property type="match status" value="1"/>
</dbReference>
<dbReference type="Pfam" id="PF00019">
    <property type="entry name" value="TGF_beta"/>
    <property type="match status" value="1"/>
</dbReference>
<dbReference type="Pfam" id="PF00688">
    <property type="entry name" value="TGFb_propeptide"/>
    <property type="match status" value="1"/>
</dbReference>
<dbReference type="SMART" id="SM00204">
    <property type="entry name" value="TGFB"/>
    <property type="match status" value="1"/>
</dbReference>
<dbReference type="SUPFAM" id="SSF57501">
    <property type="entry name" value="Cystine-knot cytokines"/>
    <property type="match status" value="1"/>
</dbReference>
<dbReference type="PROSITE" id="PS00250">
    <property type="entry name" value="TGF_BETA_1"/>
    <property type="match status" value="1"/>
</dbReference>
<dbReference type="PROSITE" id="PS51362">
    <property type="entry name" value="TGF_BETA_2"/>
    <property type="match status" value="1"/>
</dbReference>
<comment type="function">
    <text evidence="1">Acts specifically as a negative regulator of skeletal muscle growth.</text>
</comment>
<comment type="subunit">
    <text evidence="1">Homodimer; disulfide-linked. Interacts with WFIKKN2, leading to inhibit its activity. Interacts with FSTL3.</text>
</comment>
<comment type="subcellular location">
    <subcellularLocation>
        <location evidence="1">Secreted</location>
    </subcellularLocation>
</comment>
<comment type="PTM">
    <text evidence="1">Synthesized as large precursor molecule that undergoes proteolytic cleavage to generate an N-terminal propeptide and a disulfide linked C-terminal dimer, which is the biologically active molecule. The circulating form consists of a latent complex of the C-terminal dimer and other proteins, including its propeptide, which maintain the C-terminal dimer in a latent, inactive state. Ligand activation requires additional cleavage of the prodomain by a tolloid-like metalloproteinase.</text>
</comment>
<comment type="similarity">
    <text evidence="4">Belongs to the TGF-beta family.</text>
</comment>
<keyword id="KW-0165">Cleavage on pair of basic residues</keyword>
<keyword id="KW-0202">Cytokine</keyword>
<keyword id="KW-1015">Disulfide bond</keyword>
<keyword id="KW-0325">Glycoprotein</keyword>
<keyword id="KW-0339">Growth factor</keyword>
<keyword id="KW-0358">Heparin-binding</keyword>
<keyword id="KW-0964">Secreted</keyword>
<keyword id="KW-0732">Signal</keyword>
<protein>
    <recommendedName>
        <fullName>Growth/differentiation factor 8</fullName>
        <shortName>GDF-8</shortName>
    </recommendedName>
    <alternativeName>
        <fullName>Myostatin</fullName>
    </alternativeName>
</protein>